<proteinExistence type="evidence at protein level"/>
<sequence length="457" mass="48793">MPHNSIRSGHGGLNQLGGAFVNGRPLPEVVRQRIVDLAHQGVRPCDISRQLRVSHGCVSKILGRYYETGSIRPGVIGGSKPKVATPKVVEKIGDYKRQNPTMFAWEIRDRLLAEGVCDNDTVPSVSSINRIIRTKVQQPFNLPMDSCVATKSLSPGHTLIPSSAVTPPESPQSDSLGSTYSINGLLGIAQPGNDNKRKMDDSDQDSCRLSIDSQSSSSGPRKHLRTDTFSQHHLEALECPFERQHYPEAYASPSHTKGEQGLYPLPLLNSALDDGKATLTSSNTPLGRNLSTHQTYPVVADPHSPFAIKQETPELSSSSSTPSSLSSSAFLDLQQVGSGGPAGASVPPFNAFPHAASVYGQFTGQALLSGREMVGPTLPGYPPHIPTSGQGSYASSAIAGMVAGSEYSGNAYSHTPYSSYSEAWRFPNSSLLSSPYYYSSTSRPSAPPTSATAFDHL</sequence>
<evidence type="ECO:0000250" key="1"/>
<evidence type="ECO:0000255" key="2">
    <source>
        <dbReference type="PROSITE-ProRule" id="PRU00381"/>
    </source>
</evidence>
<evidence type="ECO:0000256" key="3">
    <source>
        <dbReference type="SAM" id="MobiDB-lite"/>
    </source>
</evidence>
<evidence type="ECO:0000305" key="4"/>
<evidence type="ECO:0007744" key="5">
    <source>
    </source>
</evidence>
<reference key="1">
    <citation type="journal article" date="1990" name="Development">
        <title>Pax8, a murine paired box gene expressed in the developing excretory system and thyroid gland.</title>
        <authorList>
            <person name="Plachov D."/>
            <person name="Chowdhury K."/>
            <person name="Walther C."/>
            <person name="Simon D."/>
            <person name="Guenet J.-L."/>
            <person name="Gruss P."/>
        </authorList>
    </citation>
    <scope>NUCLEOTIDE SEQUENCE [MRNA]</scope>
</reference>
<reference key="2">
    <citation type="journal article" date="1992" name="Genes Dev.">
        <title>Pax-5 encodes the transcription factor BSAP and is expressed in B lymphocytes, the developing CNS, and adult testis.</title>
        <authorList>
            <person name="Adams B."/>
            <person name="Doerfler P."/>
            <person name="Aguzzi A."/>
            <person name="Kozmik Z."/>
            <person name="Urbanek P."/>
            <person name="Maurer-Fogy I."/>
            <person name="Busslinger M."/>
        </authorList>
    </citation>
    <scope>SEQUENCE REVISION TO 158; 263 AND 340</scope>
</reference>
<reference key="3">
    <citation type="journal article" date="1997" name="Genomics">
        <title>The genomic organization of the murine Pax 8 gene and characterization of its basal promoter.</title>
        <authorList>
            <person name="Okladnova O."/>
            <person name="Poleev A."/>
            <person name="Fantes J."/>
            <person name="Lee M."/>
            <person name="Plachov D."/>
            <person name="Horst J."/>
        </authorList>
    </citation>
    <scope>NUCLEOTIDE SEQUENCE [GENOMIC DNA]</scope>
    <source>
        <strain>C57BL/6J</strain>
        <tissue>Kidney</tissue>
    </source>
</reference>
<reference key="4">
    <citation type="journal article" date="2009" name="PLoS Biol.">
        <title>Lineage-specific biology revealed by a finished genome assembly of the mouse.</title>
        <authorList>
            <person name="Church D.M."/>
            <person name="Goodstadt L."/>
            <person name="Hillier L.W."/>
            <person name="Zody M.C."/>
            <person name="Goldstein S."/>
            <person name="She X."/>
            <person name="Bult C.J."/>
            <person name="Agarwala R."/>
            <person name="Cherry J.L."/>
            <person name="DiCuccio M."/>
            <person name="Hlavina W."/>
            <person name="Kapustin Y."/>
            <person name="Meric P."/>
            <person name="Maglott D."/>
            <person name="Birtle Z."/>
            <person name="Marques A.C."/>
            <person name="Graves T."/>
            <person name="Zhou S."/>
            <person name="Teague B."/>
            <person name="Potamousis K."/>
            <person name="Churas C."/>
            <person name="Place M."/>
            <person name="Herschleb J."/>
            <person name="Runnheim R."/>
            <person name="Forrest D."/>
            <person name="Amos-Landgraf J."/>
            <person name="Schwartz D.C."/>
            <person name="Cheng Z."/>
            <person name="Lindblad-Toh K."/>
            <person name="Eichler E.E."/>
            <person name="Ponting C.P."/>
        </authorList>
    </citation>
    <scope>NUCLEOTIDE SEQUENCE [LARGE SCALE GENOMIC DNA]</scope>
    <source>
        <strain>C57BL/6J</strain>
    </source>
</reference>
<reference key="5">
    <citation type="submission" date="2005-07" db="EMBL/GenBank/DDBJ databases">
        <authorList>
            <person name="Mural R.J."/>
            <person name="Adams M.D."/>
            <person name="Myers E.W."/>
            <person name="Smith H.O."/>
            <person name="Venter J.C."/>
        </authorList>
    </citation>
    <scope>NUCLEOTIDE SEQUENCE [LARGE SCALE GENOMIC DNA]</scope>
</reference>
<reference key="6">
    <citation type="journal article" date="2004" name="Genome Res.">
        <title>The status, quality, and expansion of the NIH full-length cDNA project: the Mammalian Gene Collection (MGC).</title>
        <authorList>
            <consortium name="The MGC Project Team"/>
        </authorList>
    </citation>
    <scope>NUCLEOTIDE SEQUENCE [LARGE SCALE MRNA]</scope>
    <source>
        <strain>FVB/N</strain>
        <tissue>Kidney</tissue>
    </source>
</reference>
<reference key="7">
    <citation type="journal article" date="2010" name="Cell">
        <title>A tissue-specific atlas of mouse protein phosphorylation and expression.</title>
        <authorList>
            <person name="Huttlin E.L."/>
            <person name="Jedrychowski M.P."/>
            <person name="Elias J.E."/>
            <person name="Goswami T."/>
            <person name="Rad R."/>
            <person name="Beausoleil S.A."/>
            <person name="Villen J."/>
            <person name="Haas W."/>
            <person name="Sowa M.E."/>
            <person name="Gygi S.P."/>
        </authorList>
    </citation>
    <scope>PHOSPHORYLATION [LARGE SCALE ANALYSIS] AT SER-304</scope>
    <scope>IDENTIFICATION BY MASS SPECTROMETRY [LARGE SCALE ANALYSIS]</scope>
    <source>
        <tissue>Kidney</tissue>
    </source>
</reference>
<dbReference type="EMBL" id="X57487">
    <property type="protein sequence ID" value="CAA40725.1"/>
    <property type="molecule type" value="mRNA"/>
</dbReference>
<dbReference type="EMBL" id="X99592">
    <property type="protein sequence ID" value="CAA67904.1"/>
    <property type="molecule type" value="Genomic_DNA"/>
</dbReference>
<dbReference type="EMBL" id="X99593">
    <property type="protein sequence ID" value="CAA67904.1"/>
    <property type="status" value="JOINED"/>
    <property type="molecule type" value="Genomic_DNA"/>
</dbReference>
<dbReference type="EMBL" id="X99594">
    <property type="protein sequence ID" value="CAA67904.1"/>
    <property type="status" value="JOINED"/>
    <property type="molecule type" value="Genomic_DNA"/>
</dbReference>
<dbReference type="EMBL" id="X99595">
    <property type="protein sequence ID" value="CAA67904.1"/>
    <property type="status" value="JOINED"/>
    <property type="molecule type" value="Genomic_DNA"/>
</dbReference>
<dbReference type="EMBL" id="X99596">
    <property type="protein sequence ID" value="CAA67904.1"/>
    <property type="status" value="JOINED"/>
    <property type="molecule type" value="Genomic_DNA"/>
</dbReference>
<dbReference type="EMBL" id="X99597">
    <property type="protein sequence ID" value="CAA67904.1"/>
    <property type="status" value="JOINED"/>
    <property type="molecule type" value="Genomic_DNA"/>
</dbReference>
<dbReference type="EMBL" id="X99598">
    <property type="protein sequence ID" value="CAA67904.1"/>
    <property type="status" value="JOINED"/>
    <property type="molecule type" value="Genomic_DNA"/>
</dbReference>
<dbReference type="EMBL" id="AL732528">
    <property type="status" value="NOT_ANNOTATED_CDS"/>
    <property type="molecule type" value="Genomic_DNA"/>
</dbReference>
<dbReference type="EMBL" id="CH466542">
    <property type="protein sequence ID" value="EDL08172.1"/>
    <property type="molecule type" value="Genomic_DNA"/>
</dbReference>
<dbReference type="EMBL" id="BC020526">
    <property type="protein sequence ID" value="AAH20526.1"/>
    <property type="molecule type" value="mRNA"/>
</dbReference>
<dbReference type="CCDS" id="CCDS15738.1"/>
<dbReference type="PIR" id="A56925">
    <property type="entry name" value="A56925"/>
</dbReference>
<dbReference type="RefSeq" id="NP_035170.1">
    <property type="nucleotide sequence ID" value="NM_011040.4"/>
</dbReference>
<dbReference type="BMRB" id="Q00288"/>
<dbReference type="SMR" id="Q00288"/>
<dbReference type="BioGRID" id="202035">
    <property type="interactions" value="4"/>
</dbReference>
<dbReference type="FunCoup" id="Q00288">
    <property type="interactions" value="564"/>
</dbReference>
<dbReference type="IntAct" id="Q00288">
    <property type="interactions" value="3"/>
</dbReference>
<dbReference type="STRING" id="10090.ENSMUSP00000028355"/>
<dbReference type="GlyGen" id="Q00288">
    <property type="glycosylation" value="2 sites"/>
</dbReference>
<dbReference type="iPTMnet" id="Q00288"/>
<dbReference type="PhosphoSitePlus" id="Q00288"/>
<dbReference type="PaxDb" id="10090-ENSMUSP00000028355"/>
<dbReference type="ProteomicsDB" id="294390"/>
<dbReference type="Antibodypedia" id="9626">
    <property type="antibodies" value="997 antibodies from 48 providers"/>
</dbReference>
<dbReference type="DNASU" id="18510"/>
<dbReference type="Ensembl" id="ENSMUST00000028355.11">
    <property type="protein sequence ID" value="ENSMUSP00000028355.5"/>
    <property type="gene ID" value="ENSMUSG00000026976.16"/>
</dbReference>
<dbReference type="GeneID" id="18510"/>
<dbReference type="KEGG" id="mmu:18510"/>
<dbReference type="UCSC" id="uc008ipb.2">
    <property type="organism name" value="mouse"/>
</dbReference>
<dbReference type="AGR" id="MGI:97492"/>
<dbReference type="CTD" id="7849"/>
<dbReference type="MGI" id="MGI:97492">
    <property type="gene designation" value="Pax8"/>
</dbReference>
<dbReference type="VEuPathDB" id="HostDB:ENSMUSG00000026976"/>
<dbReference type="eggNOG" id="KOG3862">
    <property type="taxonomic scope" value="Eukaryota"/>
</dbReference>
<dbReference type="GeneTree" id="ENSGT00940000161868"/>
<dbReference type="InParanoid" id="Q00288"/>
<dbReference type="OMA" id="CNISCYA"/>
<dbReference type="OrthoDB" id="3225452at2759"/>
<dbReference type="PhylomeDB" id="Q00288"/>
<dbReference type="TreeFam" id="TF315397"/>
<dbReference type="BioGRID-ORCS" id="18510">
    <property type="hits" value="9 hits in 79 CRISPR screens"/>
</dbReference>
<dbReference type="ChiTaRS" id="Pax8">
    <property type="organism name" value="mouse"/>
</dbReference>
<dbReference type="PRO" id="PR:Q00288"/>
<dbReference type="Proteomes" id="UP000000589">
    <property type="component" value="Chromosome 2"/>
</dbReference>
<dbReference type="RNAct" id="Q00288">
    <property type="molecule type" value="protein"/>
</dbReference>
<dbReference type="Bgee" id="ENSMUSG00000026976">
    <property type="expression patterns" value="Expressed in thyroid gland and 96 other cell types or tissues"/>
</dbReference>
<dbReference type="ExpressionAtlas" id="Q00288">
    <property type="expression patterns" value="baseline and differential"/>
</dbReference>
<dbReference type="GO" id="GO:0005654">
    <property type="term" value="C:nucleoplasm"/>
    <property type="evidence" value="ECO:0000250"/>
    <property type="project" value="UniProtKB"/>
</dbReference>
<dbReference type="GO" id="GO:0005634">
    <property type="term" value="C:nucleus"/>
    <property type="evidence" value="ECO:0000314"/>
    <property type="project" value="MGI"/>
</dbReference>
<dbReference type="GO" id="GO:0005667">
    <property type="term" value="C:transcription regulator complex"/>
    <property type="evidence" value="ECO:0000304"/>
    <property type="project" value="MGI"/>
</dbReference>
<dbReference type="GO" id="GO:0003677">
    <property type="term" value="F:DNA binding"/>
    <property type="evidence" value="ECO:0000250"/>
    <property type="project" value="UniProtKB"/>
</dbReference>
<dbReference type="GO" id="GO:0001228">
    <property type="term" value="F:DNA-binding transcription activator activity, RNA polymerase II-specific"/>
    <property type="evidence" value="ECO:0007669"/>
    <property type="project" value="Ensembl"/>
</dbReference>
<dbReference type="GO" id="GO:0003700">
    <property type="term" value="F:DNA-binding transcription factor activity"/>
    <property type="evidence" value="ECO:0000250"/>
    <property type="project" value="UniProtKB"/>
</dbReference>
<dbReference type="GO" id="GO:0000978">
    <property type="term" value="F:RNA polymerase II cis-regulatory region sequence-specific DNA binding"/>
    <property type="evidence" value="ECO:0000250"/>
    <property type="project" value="UniProtKB"/>
</dbReference>
<dbReference type="GO" id="GO:0000976">
    <property type="term" value="F:transcription cis-regulatory region binding"/>
    <property type="evidence" value="ECO:0000314"/>
    <property type="project" value="UniProtKB"/>
</dbReference>
<dbReference type="GO" id="GO:0009887">
    <property type="term" value="P:animal organ morphogenesis"/>
    <property type="evidence" value="ECO:0000304"/>
    <property type="project" value="MGI"/>
</dbReference>
<dbReference type="GO" id="GO:0001658">
    <property type="term" value="P:branching involved in ureteric bud morphogenesis"/>
    <property type="evidence" value="ECO:0007669"/>
    <property type="project" value="Ensembl"/>
</dbReference>
<dbReference type="GO" id="GO:0071371">
    <property type="term" value="P:cellular response to gonadotropin stimulus"/>
    <property type="evidence" value="ECO:0007669"/>
    <property type="project" value="Ensembl"/>
</dbReference>
<dbReference type="GO" id="GO:0007417">
    <property type="term" value="P:central nervous system development"/>
    <property type="evidence" value="ECO:0000270"/>
    <property type="project" value="UniProtKB"/>
</dbReference>
<dbReference type="GO" id="GO:0006351">
    <property type="term" value="P:DNA-templated transcription"/>
    <property type="evidence" value="ECO:0007669"/>
    <property type="project" value="Ensembl"/>
</dbReference>
<dbReference type="GO" id="GO:0030855">
    <property type="term" value="P:epithelial cell differentiation"/>
    <property type="evidence" value="ECO:0000315"/>
    <property type="project" value="MGI"/>
</dbReference>
<dbReference type="GO" id="GO:0042472">
    <property type="term" value="P:inner ear morphogenesis"/>
    <property type="evidence" value="ECO:0000316"/>
    <property type="project" value="UniProtKB"/>
</dbReference>
<dbReference type="GO" id="GO:0072073">
    <property type="term" value="P:kidney epithelium development"/>
    <property type="evidence" value="ECO:0000270"/>
    <property type="project" value="UniProtKB"/>
</dbReference>
<dbReference type="GO" id="GO:0003337">
    <property type="term" value="P:mesenchymal to epithelial transition involved in metanephros morphogenesis"/>
    <property type="evidence" value="ECO:0007669"/>
    <property type="project" value="Ensembl"/>
</dbReference>
<dbReference type="GO" id="GO:0072164">
    <property type="term" value="P:mesonephric tubule development"/>
    <property type="evidence" value="ECO:0000270"/>
    <property type="project" value="UniProtKB"/>
</dbReference>
<dbReference type="GO" id="GO:0001823">
    <property type="term" value="P:mesonephros development"/>
    <property type="evidence" value="ECO:0000315"/>
    <property type="project" value="UniProtKB"/>
</dbReference>
<dbReference type="GO" id="GO:0072278">
    <property type="term" value="P:metanephric comma-shaped body morphogenesis"/>
    <property type="evidence" value="ECO:0007669"/>
    <property type="project" value="Ensembl"/>
</dbReference>
<dbReference type="GO" id="GO:0072221">
    <property type="term" value="P:metanephric distal convoluted tubule development"/>
    <property type="evidence" value="ECO:0000315"/>
    <property type="project" value="UniProtKB"/>
</dbReference>
<dbReference type="GO" id="GO:0072289">
    <property type="term" value="P:metanephric nephron tubule formation"/>
    <property type="evidence" value="ECO:0000315"/>
    <property type="project" value="UniProtKB"/>
</dbReference>
<dbReference type="GO" id="GO:0072284">
    <property type="term" value="P:metanephric S-shaped body morphogenesis"/>
    <property type="evidence" value="ECO:0007669"/>
    <property type="project" value="Ensembl"/>
</dbReference>
<dbReference type="GO" id="GO:0001656">
    <property type="term" value="P:metanephros development"/>
    <property type="evidence" value="ECO:0000316"/>
    <property type="project" value="MGI"/>
</dbReference>
<dbReference type="GO" id="GO:1900215">
    <property type="term" value="P:negative regulation of apoptotic process involved in metanephric collecting duct development"/>
    <property type="evidence" value="ECO:0000315"/>
    <property type="project" value="UniProtKB"/>
</dbReference>
<dbReference type="GO" id="GO:1900218">
    <property type="term" value="P:negative regulation of apoptotic process involved in metanephric nephron tubule development"/>
    <property type="evidence" value="ECO:0000315"/>
    <property type="project" value="UniProtKB"/>
</dbReference>
<dbReference type="GO" id="GO:0010667">
    <property type="term" value="P:negative regulation of cardiac muscle cell apoptotic process"/>
    <property type="evidence" value="ECO:0000315"/>
    <property type="project" value="BHF-UCL"/>
</dbReference>
<dbReference type="GO" id="GO:0072305">
    <property type="term" value="P:negative regulation of mesenchymal cell apoptotic process involved in metanephric nephron morphogenesis"/>
    <property type="evidence" value="ECO:0000315"/>
    <property type="project" value="UniProtKB"/>
</dbReference>
<dbReference type="GO" id="GO:1900212">
    <property type="term" value="P:negative regulation of mesenchymal cell apoptotic process involved in metanephros development"/>
    <property type="evidence" value="ECO:0000315"/>
    <property type="project" value="UniProtKB"/>
</dbReference>
<dbReference type="GO" id="GO:0071599">
    <property type="term" value="P:otic vesicle development"/>
    <property type="evidence" value="ECO:0007669"/>
    <property type="project" value="Ensembl"/>
</dbReference>
<dbReference type="GO" id="GO:0090190">
    <property type="term" value="P:positive regulation of branching involved in ureteric bud morphogenesis"/>
    <property type="evidence" value="ECO:0000315"/>
    <property type="project" value="UniProtKB"/>
</dbReference>
<dbReference type="GO" id="GO:0045893">
    <property type="term" value="P:positive regulation of DNA-templated transcription"/>
    <property type="evidence" value="ECO:0000314"/>
    <property type="project" value="UniProtKB"/>
</dbReference>
<dbReference type="GO" id="GO:0072108">
    <property type="term" value="P:positive regulation of mesenchymal to epithelial transition involved in metanephros morphogenesis"/>
    <property type="evidence" value="ECO:0000315"/>
    <property type="project" value="UniProtKB"/>
</dbReference>
<dbReference type="GO" id="GO:2000594">
    <property type="term" value="P:positive regulation of metanephric DCT cell differentiation"/>
    <property type="evidence" value="ECO:0000315"/>
    <property type="project" value="UniProtKB"/>
</dbReference>
<dbReference type="GO" id="GO:2000611">
    <property type="term" value="P:positive regulation of thyroid hormone generation"/>
    <property type="evidence" value="ECO:0000315"/>
    <property type="project" value="UniProtKB"/>
</dbReference>
<dbReference type="GO" id="GO:0045944">
    <property type="term" value="P:positive regulation of transcription by RNA polymerase II"/>
    <property type="evidence" value="ECO:0000266"/>
    <property type="project" value="MGI"/>
</dbReference>
<dbReference type="GO" id="GO:0039003">
    <property type="term" value="P:pronephric field specification"/>
    <property type="evidence" value="ECO:0000270"/>
    <property type="project" value="UniProtKB"/>
</dbReference>
<dbReference type="GO" id="GO:0048793">
    <property type="term" value="P:pronephros development"/>
    <property type="evidence" value="ECO:0000315"/>
    <property type="project" value="UniProtKB"/>
</dbReference>
<dbReference type="GO" id="GO:0042981">
    <property type="term" value="P:regulation of apoptotic process"/>
    <property type="evidence" value="ECO:0000315"/>
    <property type="project" value="UniProtKB"/>
</dbReference>
<dbReference type="GO" id="GO:0006355">
    <property type="term" value="P:regulation of DNA-templated transcription"/>
    <property type="evidence" value="ECO:0000304"/>
    <property type="project" value="MGI"/>
</dbReference>
<dbReference type="GO" id="GO:0072307">
    <property type="term" value="P:regulation of metanephric nephron tubule epithelial cell differentiation"/>
    <property type="evidence" value="ECO:0000315"/>
    <property type="project" value="UniProtKB"/>
</dbReference>
<dbReference type="GO" id="GO:2000612">
    <property type="term" value="P:regulation of thyroid-stimulating hormone secretion"/>
    <property type="evidence" value="ECO:0000250"/>
    <property type="project" value="UniProtKB"/>
</dbReference>
<dbReference type="GO" id="GO:0072050">
    <property type="term" value="P:S-shaped body morphogenesis"/>
    <property type="evidence" value="ECO:0000270"/>
    <property type="project" value="UniProtKB"/>
</dbReference>
<dbReference type="GO" id="GO:0006790">
    <property type="term" value="P:sulfur compound metabolic process"/>
    <property type="evidence" value="ECO:0007669"/>
    <property type="project" value="Ensembl"/>
</dbReference>
<dbReference type="GO" id="GO:0030878">
    <property type="term" value="P:thyroid gland development"/>
    <property type="evidence" value="ECO:0000315"/>
    <property type="project" value="MGI"/>
</dbReference>
<dbReference type="GO" id="GO:0001655">
    <property type="term" value="P:urogenital system development"/>
    <property type="evidence" value="ECO:0000316"/>
    <property type="project" value="UniProtKB"/>
</dbReference>
<dbReference type="GO" id="GO:0003281">
    <property type="term" value="P:ventricular septum development"/>
    <property type="evidence" value="ECO:0000315"/>
    <property type="project" value="BHF-UCL"/>
</dbReference>
<dbReference type="CDD" id="cd00131">
    <property type="entry name" value="PAX"/>
    <property type="match status" value="1"/>
</dbReference>
<dbReference type="FunFam" id="1.10.10.10:FF:000013">
    <property type="entry name" value="Paired box 8 isoform 1"/>
    <property type="match status" value="1"/>
</dbReference>
<dbReference type="FunFam" id="1.10.10.10:FF:000003">
    <property type="entry name" value="Paired box protein Pax-6"/>
    <property type="match status" value="1"/>
</dbReference>
<dbReference type="Gene3D" id="1.10.10.10">
    <property type="entry name" value="Winged helix-like DNA-binding domain superfamily/Winged helix DNA-binding domain"/>
    <property type="match status" value="2"/>
</dbReference>
<dbReference type="InterPro" id="IPR009057">
    <property type="entry name" value="Homeodomain-like_sf"/>
</dbReference>
<dbReference type="InterPro" id="IPR043182">
    <property type="entry name" value="PAIRED_DNA-bd_dom"/>
</dbReference>
<dbReference type="InterPro" id="IPR001523">
    <property type="entry name" value="Paired_dom"/>
</dbReference>
<dbReference type="InterPro" id="IPR022130">
    <property type="entry name" value="Pax2_C"/>
</dbReference>
<dbReference type="InterPro" id="IPR043565">
    <property type="entry name" value="PAX_fam"/>
</dbReference>
<dbReference type="InterPro" id="IPR036388">
    <property type="entry name" value="WH-like_DNA-bd_sf"/>
</dbReference>
<dbReference type="PANTHER" id="PTHR45636">
    <property type="entry name" value="PAIRED BOX PROTEIN PAX-6-RELATED-RELATED"/>
    <property type="match status" value="1"/>
</dbReference>
<dbReference type="PANTHER" id="PTHR45636:SF6">
    <property type="entry name" value="PAIRED BOX PROTEIN PAX-8"/>
    <property type="match status" value="1"/>
</dbReference>
<dbReference type="Pfam" id="PF00292">
    <property type="entry name" value="PAX"/>
    <property type="match status" value="1"/>
</dbReference>
<dbReference type="Pfam" id="PF12403">
    <property type="entry name" value="Pax2_C"/>
    <property type="match status" value="1"/>
</dbReference>
<dbReference type="PRINTS" id="PR00027">
    <property type="entry name" value="PAIREDBOX"/>
</dbReference>
<dbReference type="SMART" id="SM00351">
    <property type="entry name" value="PAX"/>
    <property type="match status" value="1"/>
</dbReference>
<dbReference type="SUPFAM" id="SSF46689">
    <property type="entry name" value="Homeodomain-like"/>
    <property type="match status" value="1"/>
</dbReference>
<dbReference type="PROSITE" id="PS00034">
    <property type="entry name" value="PAIRED_1"/>
    <property type="match status" value="1"/>
</dbReference>
<dbReference type="PROSITE" id="PS51057">
    <property type="entry name" value="PAIRED_2"/>
    <property type="match status" value="1"/>
</dbReference>
<feature type="chain" id="PRO_0000050198" description="Paired box protein Pax-8">
    <location>
        <begin position="1"/>
        <end position="457"/>
    </location>
</feature>
<feature type="DNA-binding region" description="Paired" evidence="2">
    <location>
        <begin position="9"/>
        <end position="135"/>
    </location>
</feature>
<feature type="region of interest" description="PAI subdomain" evidence="2">
    <location>
        <begin position="12"/>
        <end position="68"/>
    </location>
</feature>
<feature type="region of interest" description="RED subdomain" evidence="2">
    <location>
        <begin position="87"/>
        <end position="135"/>
    </location>
</feature>
<feature type="region of interest" description="Disordered" evidence="3">
    <location>
        <begin position="159"/>
        <end position="224"/>
    </location>
</feature>
<feature type="compositionally biased region" description="Polar residues" evidence="3">
    <location>
        <begin position="159"/>
        <end position="182"/>
    </location>
</feature>
<feature type="modified residue" description="Phosphoserine" evidence="5">
    <location>
        <position position="304"/>
    </location>
</feature>
<feature type="sequence conflict" description="In Ref. 2; no nucleotide entry." evidence="4" ref="2">
    <original>G</original>
    <variation>D</variation>
    <location>
        <position position="340"/>
    </location>
</feature>
<protein>
    <recommendedName>
        <fullName>Paired box protein Pax-8</fullName>
    </recommendedName>
</protein>
<gene>
    <name type="primary">Pax8</name>
    <name type="synonym">Pax-8</name>
</gene>
<comment type="function">
    <text>Thought to encode a transcription factor. It may have a role in kidney cell differentiation. May play a regulatory role in mammalian development.</text>
</comment>
<comment type="subunit">
    <text evidence="1">Interacts with WWTR1.</text>
</comment>
<comment type="subcellular location">
    <subcellularLocation>
        <location>Nucleus</location>
    </subcellularLocation>
</comment>
<comment type="tissue specificity">
    <text>Expressed in the developing excretory system and the thyroid gland.</text>
</comment>
<keyword id="KW-0217">Developmental protein</keyword>
<keyword id="KW-0221">Differentiation</keyword>
<keyword id="KW-0238">DNA-binding</keyword>
<keyword id="KW-0539">Nucleus</keyword>
<keyword id="KW-0563">Paired box</keyword>
<keyword id="KW-0597">Phosphoprotein</keyword>
<keyword id="KW-1185">Reference proteome</keyword>
<keyword id="KW-0804">Transcription</keyword>
<keyword id="KW-0805">Transcription regulation</keyword>
<accession>Q00288</accession>
<accession>P97342</accession>
<accession>Q6GU20</accession>
<name>PAX8_MOUSE</name>
<organism>
    <name type="scientific">Mus musculus</name>
    <name type="common">Mouse</name>
    <dbReference type="NCBI Taxonomy" id="10090"/>
    <lineage>
        <taxon>Eukaryota</taxon>
        <taxon>Metazoa</taxon>
        <taxon>Chordata</taxon>
        <taxon>Craniata</taxon>
        <taxon>Vertebrata</taxon>
        <taxon>Euteleostomi</taxon>
        <taxon>Mammalia</taxon>
        <taxon>Eutheria</taxon>
        <taxon>Euarchontoglires</taxon>
        <taxon>Glires</taxon>
        <taxon>Rodentia</taxon>
        <taxon>Myomorpha</taxon>
        <taxon>Muroidea</taxon>
        <taxon>Muridae</taxon>
        <taxon>Murinae</taxon>
        <taxon>Mus</taxon>
        <taxon>Mus</taxon>
    </lineage>
</organism>